<proteinExistence type="inferred from homology"/>
<keyword id="KW-0456">Lyase</keyword>
<keyword id="KW-0663">Pyridoxal phosphate</keyword>
<protein>
    <recommendedName>
        <fullName evidence="1">D-serine dehydratase</fullName>
        <ecNumber evidence="1">4.3.1.18</ecNumber>
    </recommendedName>
    <alternativeName>
        <fullName evidence="1">D-serine deaminase</fullName>
        <shortName evidence="1">DSD</shortName>
    </alternativeName>
</protein>
<gene>
    <name evidence="1" type="primary">dsdA</name>
    <name type="ordered locus">SPA3653</name>
</gene>
<dbReference type="EC" id="4.3.1.18" evidence="1"/>
<dbReference type="EMBL" id="CP000026">
    <property type="protein sequence ID" value="AAV79447.1"/>
    <property type="molecule type" value="Genomic_DNA"/>
</dbReference>
<dbReference type="RefSeq" id="WP_000427998.1">
    <property type="nucleotide sequence ID" value="NC_006511.1"/>
</dbReference>
<dbReference type="SMR" id="Q5PKR3"/>
<dbReference type="KEGG" id="spt:SPA3653"/>
<dbReference type="HOGENOM" id="CLU_035707_0_0_6"/>
<dbReference type="Proteomes" id="UP000008185">
    <property type="component" value="Chromosome"/>
</dbReference>
<dbReference type="GO" id="GO:0008721">
    <property type="term" value="F:D-serine ammonia-lyase activity"/>
    <property type="evidence" value="ECO:0007669"/>
    <property type="project" value="UniProtKB-EC"/>
</dbReference>
<dbReference type="GO" id="GO:0016836">
    <property type="term" value="F:hydro-lyase activity"/>
    <property type="evidence" value="ECO:0007669"/>
    <property type="project" value="UniProtKB-UniRule"/>
</dbReference>
<dbReference type="GO" id="GO:0030170">
    <property type="term" value="F:pyridoxal phosphate binding"/>
    <property type="evidence" value="ECO:0007669"/>
    <property type="project" value="InterPro"/>
</dbReference>
<dbReference type="GO" id="GO:0036088">
    <property type="term" value="P:D-serine catabolic process"/>
    <property type="evidence" value="ECO:0007669"/>
    <property type="project" value="TreeGrafter"/>
</dbReference>
<dbReference type="GO" id="GO:0009097">
    <property type="term" value="P:isoleucine biosynthetic process"/>
    <property type="evidence" value="ECO:0007669"/>
    <property type="project" value="TreeGrafter"/>
</dbReference>
<dbReference type="CDD" id="cd06447">
    <property type="entry name" value="D-Ser-dehyd"/>
    <property type="match status" value="1"/>
</dbReference>
<dbReference type="FunFam" id="3.40.50.1100:FF:000018">
    <property type="entry name" value="D-serine dehydratase"/>
    <property type="match status" value="1"/>
</dbReference>
<dbReference type="Gene3D" id="3.40.50.1100">
    <property type="match status" value="2"/>
</dbReference>
<dbReference type="HAMAP" id="MF_01030">
    <property type="entry name" value="D_Ser_dehydrat"/>
    <property type="match status" value="1"/>
</dbReference>
<dbReference type="InterPro" id="IPR011780">
    <property type="entry name" value="D_Ser_am_lyase"/>
</dbReference>
<dbReference type="InterPro" id="IPR050147">
    <property type="entry name" value="Ser/Thr_Dehydratase"/>
</dbReference>
<dbReference type="InterPro" id="IPR000634">
    <property type="entry name" value="Ser/Thr_deHydtase_PyrdxlP-BS"/>
</dbReference>
<dbReference type="InterPro" id="IPR001926">
    <property type="entry name" value="TrpB-like_PALP"/>
</dbReference>
<dbReference type="InterPro" id="IPR036052">
    <property type="entry name" value="TrpB-like_PALP_sf"/>
</dbReference>
<dbReference type="NCBIfam" id="TIGR02035">
    <property type="entry name" value="D_Ser_am_lyase"/>
    <property type="match status" value="1"/>
</dbReference>
<dbReference type="NCBIfam" id="NF002823">
    <property type="entry name" value="PRK02991.1"/>
    <property type="match status" value="1"/>
</dbReference>
<dbReference type="PANTHER" id="PTHR48078:SF9">
    <property type="entry name" value="D-SERINE DEHYDRATASE"/>
    <property type="match status" value="1"/>
</dbReference>
<dbReference type="PANTHER" id="PTHR48078">
    <property type="entry name" value="THREONINE DEHYDRATASE, MITOCHONDRIAL-RELATED"/>
    <property type="match status" value="1"/>
</dbReference>
<dbReference type="Pfam" id="PF00291">
    <property type="entry name" value="PALP"/>
    <property type="match status" value="1"/>
</dbReference>
<dbReference type="SUPFAM" id="SSF53686">
    <property type="entry name" value="Tryptophan synthase beta subunit-like PLP-dependent enzymes"/>
    <property type="match status" value="1"/>
</dbReference>
<dbReference type="PROSITE" id="PS00165">
    <property type="entry name" value="DEHYDRATASE_SER_THR"/>
    <property type="match status" value="1"/>
</dbReference>
<reference key="1">
    <citation type="journal article" date="2004" name="Nat. Genet.">
        <title>Comparison of genome degradation in Paratyphi A and Typhi, human-restricted serovars of Salmonella enterica that cause typhoid.</title>
        <authorList>
            <person name="McClelland M."/>
            <person name="Sanderson K.E."/>
            <person name="Clifton S.W."/>
            <person name="Latreille P."/>
            <person name="Porwollik S."/>
            <person name="Sabo A."/>
            <person name="Meyer R."/>
            <person name="Bieri T."/>
            <person name="Ozersky P."/>
            <person name="McLellan M."/>
            <person name="Harkins C.R."/>
            <person name="Wang C."/>
            <person name="Nguyen C."/>
            <person name="Berghoff A."/>
            <person name="Elliott G."/>
            <person name="Kohlberg S."/>
            <person name="Strong C."/>
            <person name="Du F."/>
            <person name="Carter J."/>
            <person name="Kremizki C."/>
            <person name="Layman D."/>
            <person name="Leonard S."/>
            <person name="Sun H."/>
            <person name="Fulton L."/>
            <person name="Nash W."/>
            <person name="Miner T."/>
            <person name="Minx P."/>
            <person name="Delehaunty K."/>
            <person name="Fronick C."/>
            <person name="Magrini V."/>
            <person name="Nhan M."/>
            <person name="Warren W."/>
            <person name="Florea L."/>
            <person name="Spieth J."/>
            <person name="Wilson R.K."/>
        </authorList>
    </citation>
    <scope>NUCLEOTIDE SEQUENCE [LARGE SCALE GENOMIC DNA]</scope>
    <source>
        <strain>ATCC 9150 / SARB42</strain>
    </source>
</reference>
<feature type="chain" id="PRO_0000291740" description="D-serine dehydratase">
    <location>
        <begin position="1"/>
        <end position="440"/>
    </location>
</feature>
<feature type="modified residue" description="N6-(pyridoxal phosphate)lysine" evidence="1">
    <location>
        <position position="116"/>
    </location>
</feature>
<accession>Q5PKR3</accession>
<evidence type="ECO:0000255" key="1">
    <source>
        <dbReference type="HAMAP-Rule" id="MF_01030"/>
    </source>
</evidence>
<organism>
    <name type="scientific">Salmonella paratyphi A (strain ATCC 9150 / SARB42)</name>
    <dbReference type="NCBI Taxonomy" id="295319"/>
    <lineage>
        <taxon>Bacteria</taxon>
        <taxon>Pseudomonadati</taxon>
        <taxon>Pseudomonadota</taxon>
        <taxon>Gammaproteobacteria</taxon>
        <taxon>Enterobacterales</taxon>
        <taxon>Enterobacteriaceae</taxon>
        <taxon>Salmonella</taxon>
    </lineage>
</organism>
<sequence>MENIQKLIARYPLVEDLVALKETTWFNPGTTSLAQGLPYVGLTEQDVNAAHDRLARFAPYLAKAFPQTAAAGGMIESDVVAIPAMQKRLEKEYGQTIDGEMLLKKDSHLAISGSIKARGGIYEVLTHAEKLALEAGLLTTDDDYSVLLSPEFKQFFSQHSIAVGSTGNLGLSIGIMSACIGFKVTVHMSADARAWKKAKLRSHGVTVVEYEDDYGVAVEQGRKAAQSDPNCFFIDDENSRTLFLGYAVAGQRLKAQFAQQGRVVDASHPLFVYLPCGVGGGPGGVAFGLKLAFGDNVHCFFAEPTHSPCMLLGVYTGLHDAISVQDIGIDNLTAADGLAVGRASGFVGRAMERLLDGLYTLDDQTMYDMLGWLAQEEGIRLEPSALAGMAGPQRICAATEYQQRHGFSQTQLGNATHLVWATGGGMVPEDEMEQYLAKGR</sequence>
<comment type="catalytic activity">
    <reaction evidence="1">
        <text>D-serine = pyruvate + NH4(+)</text>
        <dbReference type="Rhea" id="RHEA:13977"/>
        <dbReference type="ChEBI" id="CHEBI:15361"/>
        <dbReference type="ChEBI" id="CHEBI:28938"/>
        <dbReference type="ChEBI" id="CHEBI:35247"/>
        <dbReference type="EC" id="4.3.1.18"/>
    </reaction>
</comment>
<comment type="cofactor">
    <cofactor evidence="1">
        <name>pyridoxal 5'-phosphate</name>
        <dbReference type="ChEBI" id="CHEBI:597326"/>
    </cofactor>
</comment>
<comment type="subunit">
    <text evidence="1">Monomer.</text>
</comment>
<comment type="similarity">
    <text evidence="1">Belongs to the serine/threonine dehydratase family. DsdA subfamily.</text>
</comment>
<name>SDHD_SALPA</name>